<accession>Q2UM42</accession>
<sequence>MAQGPSCASELHYYRALDHANAGFATGTYHLKDDLHLATPPPHPSEAPVVNPNPLATVPTPPTSGVKLSLVSVGQRNKLPVFTSKEKVTAPPFADGNPALAAIPTKDGLKRRKPKNNIIKSSSSFVSRVITHEASSKRLNDRNPDGLFAFANINRAFQWLDLSSKNKEEPLAKILFTKAHMLTHDINELTKSSSHIDIAMGSSAGDIIWYEPISQKYARINKNGVVSNSPVTHIKWIPGSENMFMAAHANGQLVVYDKEKEDALFTPEISNHSAEAMKASSRLPLQVLKSVNSRNQKTNPVALWKLANQKISQFAFSPDQRHLAVVLEDGSLRVMDYLKEEVLDIFRSYYGGLICVCWSPDGKYIVTGGQDDLVTIWSFPERKIVARCQGHNSWVSTVAFDPWRCDERTYRFGSVGDDCRLLLWDFSVGMLHRPRAHQASARQRTSMIASNTQHFNRHRADSASNRMRSDSQRTADTYNDYDSAVRHPVEPRARTALLPPIMSKIVGDDPICWLGFQEDSIMTSSLEGHIRTWDRPREGINDSYNGNTSSPAISTSAAGSGSGIADSAMGSL</sequence>
<reference key="1">
    <citation type="journal article" date="2005" name="Nature">
        <title>Genome sequencing and analysis of Aspergillus oryzae.</title>
        <authorList>
            <person name="Machida M."/>
            <person name="Asai K."/>
            <person name="Sano M."/>
            <person name="Tanaka T."/>
            <person name="Kumagai T."/>
            <person name="Terai G."/>
            <person name="Kusumoto K."/>
            <person name="Arima T."/>
            <person name="Akita O."/>
            <person name="Kashiwagi Y."/>
            <person name="Abe K."/>
            <person name="Gomi K."/>
            <person name="Horiuchi H."/>
            <person name="Kitamoto K."/>
            <person name="Kobayashi T."/>
            <person name="Takeuchi M."/>
            <person name="Denning D.W."/>
            <person name="Galagan J.E."/>
            <person name="Nierman W.C."/>
            <person name="Yu J."/>
            <person name="Archer D.B."/>
            <person name="Bennett J.W."/>
            <person name="Bhatnagar D."/>
            <person name="Cleveland T.E."/>
            <person name="Fedorova N.D."/>
            <person name="Gotoh O."/>
            <person name="Horikawa H."/>
            <person name="Hosoyama A."/>
            <person name="Ichinomiya M."/>
            <person name="Igarashi R."/>
            <person name="Iwashita K."/>
            <person name="Juvvadi P.R."/>
            <person name="Kato M."/>
            <person name="Kato Y."/>
            <person name="Kin T."/>
            <person name="Kokubun A."/>
            <person name="Maeda H."/>
            <person name="Maeyama N."/>
            <person name="Maruyama J."/>
            <person name="Nagasaki H."/>
            <person name="Nakajima T."/>
            <person name="Oda K."/>
            <person name="Okada K."/>
            <person name="Paulsen I."/>
            <person name="Sakamoto K."/>
            <person name="Sawano T."/>
            <person name="Takahashi M."/>
            <person name="Takase K."/>
            <person name="Terabayashi Y."/>
            <person name="Wortman J.R."/>
            <person name="Yamada O."/>
            <person name="Yamagata Y."/>
            <person name="Anazawa H."/>
            <person name="Hata Y."/>
            <person name="Koide Y."/>
            <person name="Komori T."/>
            <person name="Koyama Y."/>
            <person name="Minetoki T."/>
            <person name="Suharnan S."/>
            <person name="Tanaka A."/>
            <person name="Isono K."/>
            <person name="Kuhara S."/>
            <person name="Ogasawara N."/>
            <person name="Kikuchi H."/>
        </authorList>
    </citation>
    <scope>NUCLEOTIDE SEQUENCE [LARGE SCALE GENOMIC DNA]</scope>
    <source>
        <strain>ATCC 42149 / RIB 40</strain>
    </source>
</reference>
<dbReference type="EMBL" id="BA000050">
    <property type="protein sequence ID" value="BAE57373.1"/>
    <property type="molecule type" value="Genomic_DNA"/>
</dbReference>
<dbReference type="SMR" id="Q2UM42"/>
<dbReference type="STRING" id="510516.Q2UM42"/>
<dbReference type="EnsemblFungi" id="BAE57373">
    <property type="protein sequence ID" value="BAE57373"/>
    <property type="gene ID" value="AO090003000149"/>
</dbReference>
<dbReference type="VEuPathDB" id="FungiDB:AO090003000149"/>
<dbReference type="HOGENOM" id="CLU_016971_1_1_1"/>
<dbReference type="OMA" id="MCVCWSP"/>
<dbReference type="Proteomes" id="UP000006564">
    <property type="component" value="Chromosome 2"/>
</dbReference>
<dbReference type="GO" id="GO:0032153">
    <property type="term" value="C:cell division site"/>
    <property type="evidence" value="ECO:0007669"/>
    <property type="project" value="TreeGrafter"/>
</dbReference>
<dbReference type="GO" id="GO:0051286">
    <property type="term" value="C:cell tip"/>
    <property type="evidence" value="ECO:0007669"/>
    <property type="project" value="TreeGrafter"/>
</dbReference>
<dbReference type="GO" id="GO:0005634">
    <property type="term" value="C:nucleus"/>
    <property type="evidence" value="ECO:0007669"/>
    <property type="project" value="TreeGrafter"/>
</dbReference>
<dbReference type="GO" id="GO:0045013">
    <property type="term" value="P:carbon catabolite repression of transcription"/>
    <property type="evidence" value="ECO:0000250"/>
    <property type="project" value="UniProtKB"/>
</dbReference>
<dbReference type="FunFam" id="2.130.10.10:FF:000531">
    <property type="entry name" value="Probable catabolite repression protein creC"/>
    <property type="match status" value="1"/>
</dbReference>
<dbReference type="Gene3D" id="2.130.10.10">
    <property type="entry name" value="YVTN repeat-like/Quinoprotein amine dehydrogenase"/>
    <property type="match status" value="1"/>
</dbReference>
<dbReference type="InterPro" id="IPR015943">
    <property type="entry name" value="WD40/YVTN_repeat-like_dom_sf"/>
</dbReference>
<dbReference type="InterPro" id="IPR036322">
    <property type="entry name" value="WD40_repeat_dom_sf"/>
</dbReference>
<dbReference type="InterPro" id="IPR001680">
    <property type="entry name" value="WD40_rpt"/>
</dbReference>
<dbReference type="InterPro" id="IPR051362">
    <property type="entry name" value="WD_repeat_creC_regulators"/>
</dbReference>
<dbReference type="PANTHER" id="PTHR14107:SF16">
    <property type="entry name" value="AT02583P"/>
    <property type="match status" value="1"/>
</dbReference>
<dbReference type="PANTHER" id="PTHR14107">
    <property type="entry name" value="WD REPEAT PROTEIN"/>
    <property type="match status" value="1"/>
</dbReference>
<dbReference type="Pfam" id="PF00400">
    <property type="entry name" value="WD40"/>
    <property type="match status" value="1"/>
</dbReference>
<dbReference type="SMART" id="SM00320">
    <property type="entry name" value="WD40"/>
    <property type="match status" value="5"/>
</dbReference>
<dbReference type="SUPFAM" id="SSF50978">
    <property type="entry name" value="WD40 repeat-like"/>
    <property type="match status" value="1"/>
</dbReference>
<dbReference type="PROSITE" id="PS50082">
    <property type="entry name" value="WD_REPEATS_2"/>
    <property type="match status" value="1"/>
</dbReference>
<dbReference type="PROSITE" id="PS50294">
    <property type="entry name" value="WD_REPEATS_REGION"/>
    <property type="match status" value="1"/>
</dbReference>
<comment type="function">
    <text evidence="1">Component of the regulatory network controlling carbon source utilization through ubiquitination and deubiquitination involving creA, creB, creC, creD and acrB. Required to prevent the proteolysis of the CreB deubiquitinating enzyme in the absence of carbon catabolite repression. CreB deubiquitinating enzyme stabilized in a complex with the CreC leads to the expression of genes such as those in the proline and quinate pathways (By similarity).</text>
</comment>
<comment type="subunit">
    <text evidence="1">Interacts with creB.</text>
</comment>
<comment type="similarity">
    <text evidence="3">Belongs to the WD repeat creC family.</text>
</comment>
<name>CREC_ASPOR</name>
<keyword id="KW-1185">Reference proteome</keyword>
<keyword id="KW-0677">Repeat</keyword>
<keyword id="KW-0804">Transcription</keyword>
<keyword id="KW-0805">Transcription regulation</keyword>
<keyword id="KW-0833">Ubl conjugation pathway</keyword>
<keyword id="KW-0853">WD repeat</keyword>
<evidence type="ECO:0000250" key="1"/>
<evidence type="ECO:0000256" key="2">
    <source>
        <dbReference type="SAM" id="MobiDB-lite"/>
    </source>
</evidence>
<evidence type="ECO:0000305" key="3"/>
<proteinExistence type="inferred from homology"/>
<gene>
    <name type="primary">creC</name>
    <name type="ORF">AO090003000149</name>
</gene>
<protein>
    <recommendedName>
        <fullName>Probable catabolite repression protein creC</fullName>
    </recommendedName>
</protein>
<organism>
    <name type="scientific">Aspergillus oryzae (strain ATCC 42149 / RIB 40)</name>
    <name type="common">Yellow koji mold</name>
    <dbReference type="NCBI Taxonomy" id="510516"/>
    <lineage>
        <taxon>Eukaryota</taxon>
        <taxon>Fungi</taxon>
        <taxon>Dikarya</taxon>
        <taxon>Ascomycota</taxon>
        <taxon>Pezizomycotina</taxon>
        <taxon>Eurotiomycetes</taxon>
        <taxon>Eurotiomycetidae</taxon>
        <taxon>Eurotiales</taxon>
        <taxon>Aspergillaceae</taxon>
        <taxon>Aspergillus</taxon>
        <taxon>Aspergillus subgen. Circumdati</taxon>
    </lineage>
</organism>
<feature type="chain" id="PRO_0000395691" description="Probable catabolite repression protein creC">
    <location>
        <begin position="1"/>
        <end position="572"/>
    </location>
</feature>
<feature type="repeat" description="WD 1">
    <location>
        <begin position="226"/>
        <end position="266"/>
    </location>
</feature>
<feature type="repeat" description="WD 2">
    <location>
        <begin position="306"/>
        <end position="347"/>
    </location>
</feature>
<feature type="repeat" description="WD 3">
    <location>
        <begin position="348"/>
        <end position="387"/>
    </location>
</feature>
<feature type="repeat" description="WD 4">
    <location>
        <begin position="390"/>
        <end position="434"/>
    </location>
</feature>
<feature type="repeat" description="WD 5">
    <location>
        <begin position="506"/>
        <end position="543"/>
    </location>
</feature>
<feature type="region of interest" description="Disordered" evidence="2">
    <location>
        <begin position="36"/>
        <end position="61"/>
    </location>
</feature>
<feature type="region of interest" description="Disordered" evidence="2">
    <location>
        <begin position="458"/>
        <end position="486"/>
    </location>
</feature>
<feature type="region of interest" description="Disordered" evidence="2">
    <location>
        <begin position="541"/>
        <end position="572"/>
    </location>
</feature>
<feature type="compositionally biased region" description="Low complexity" evidence="2">
    <location>
        <begin position="549"/>
        <end position="572"/>
    </location>
</feature>